<keyword id="KW-0903">Direct protein sequencing</keyword>
<keyword id="KW-1015">Disulfide bond</keyword>
<keyword id="KW-0872">Ion channel impairing toxin</keyword>
<keyword id="KW-0528">Neurotoxin</keyword>
<keyword id="KW-0964">Secreted</keyword>
<keyword id="KW-0800">Toxin</keyword>
<keyword id="KW-0738">Voltage-gated sodium channel impairing toxin</keyword>
<organism>
    <name type="scientific">Mesobuthus eupeus</name>
    <name type="common">Lesser Asian scorpion</name>
    <name type="synonym">Buthus eupeus</name>
    <dbReference type="NCBI Taxonomy" id="34648"/>
    <lineage>
        <taxon>Eukaryota</taxon>
        <taxon>Metazoa</taxon>
        <taxon>Ecdysozoa</taxon>
        <taxon>Arthropoda</taxon>
        <taxon>Chelicerata</taxon>
        <taxon>Arachnida</taxon>
        <taxon>Scorpiones</taxon>
        <taxon>Buthida</taxon>
        <taxon>Buthoidea</taxon>
        <taxon>Buthidae</taxon>
        <taxon>Mesobuthus</taxon>
    </lineage>
</organism>
<proteinExistence type="evidence at protein level"/>
<evidence type="ECO:0000255" key="1">
    <source>
        <dbReference type="PROSITE-ProRule" id="PRU01210"/>
    </source>
</evidence>
<evidence type="ECO:0000305" key="2"/>
<comment type="function">
    <text>Alpha toxins bind voltage-independently at site-3 of sodium channels (Nav) and inhibit the inactivation of the activated channels, thereby blocking neuronal transmission. Has paralytic activity in mice.</text>
</comment>
<comment type="subcellular location">
    <subcellularLocation>
        <location>Secreted</location>
    </subcellularLocation>
</comment>
<comment type="tissue specificity">
    <text>Expressed by the venom gland.</text>
</comment>
<comment type="domain">
    <text evidence="2">Has the structural arrangement of an alpha-helix connected to antiparallel beta-sheets by disulfide bonds (CS-alpha/beta).</text>
</comment>
<comment type="similarity">
    <text evidence="2">Belongs to the long (4 C-C) scorpion toxin superfamily. Sodium channel inhibitor family. Alpha subfamily.</text>
</comment>
<sequence length="65" mass="7373">VRDGYIADDKDCAYFCGRNAYCDEECKKGAESGKCWYAGQYGNACWCYKLPDWVPIKQKVSGKCN</sequence>
<protein>
    <recommendedName>
        <fullName>Alpha-toxin BeM10</fullName>
    </recommendedName>
    <alternativeName>
        <fullName>Neurotoxin M10</fullName>
    </alternativeName>
</protein>
<dbReference type="PIR" id="JT0019">
    <property type="entry name" value="NTSR0E"/>
</dbReference>
<dbReference type="SMR" id="P01490"/>
<dbReference type="GO" id="GO:0005576">
    <property type="term" value="C:extracellular region"/>
    <property type="evidence" value="ECO:0007669"/>
    <property type="project" value="UniProtKB-SubCell"/>
</dbReference>
<dbReference type="GO" id="GO:0019871">
    <property type="term" value="F:sodium channel inhibitor activity"/>
    <property type="evidence" value="ECO:0007669"/>
    <property type="project" value="InterPro"/>
</dbReference>
<dbReference type="GO" id="GO:0090729">
    <property type="term" value="F:toxin activity"/>
    <property type="evidence" value="ECO:0007669"/>
    <property type="project" value="UniProtKB-KW"/>
</dbReference>
<dbReference type="GO" id="GO:0006952">
    <property type="term" value="P:defense response"/>
    <property type="evidence" value="ECO:0007669"/>
    <property type="project" value="InterPro"/>
</dbReference>
<dbReference type="CDD" id="cd23106">
    <property type="entry name" value="neurotoxins_LC_scorpion"/>
    <property type="match status" value="1"/>
</dbReference>
<dbReference type="Gene3D" id="3.30.30.10">
    <property type="entry name" value="Knottin, scorpion toxin-like"/>
    <property type="match status" value="1"/>
</dbReference>
<dbReference type="InterPro" id="IPR044062">
    <property type="entry name" value="LCN-type_CS_alpha_beta_dom"/>
</dbReference>
<dbReference type="InterPro" id="IPR003614">
    <property type="entry name" value="Scorpion_toxin-like"/>
</dbReference>
<dbReference type="InterPro" id="IPR036574">
    <property type="entry name" value="Scorpion_toxin-like_sf"/>
</dbReference>
<dbReference type="InterPro" id="IPR018218">
    <property type="entry name" value="Scorpion_toxinL"/>
</dbReference>
<dbReference type="InterPro" id="IPR002061">
    <property type="entry name" value="Scorpion_toxinL/defensin"/>
</dbReference>
<dbReference type="Pfam" id="PF00537">
    <property type="entry name" value="Toxin_3"/>
    <property type="match status" value="1"/>
</dbReference>
<dbReference type="PRINTS" id="PR00285">
    <property type="entry name" value="SCORPNTOXIN"/>
</dbReference>
<dbReference type="PRINTS" id="PR00284">
    <property type="entry name" value="TOXIN"/>
</dbReference>
<dbReference type="SMART" id="SM00505">
    <property type="entry name" value="Knot1"/>
    <property type="match status" value="1"/>
</dbReference>
<dbReference type="SUPFAM" id="SSF57095">
    <property type="entry name" value="Scorpion toxin-like"/>
    <property type="match status" value="1"/>
</dbReference>
<dbReference type="PROSITE" id="PS51863">
    <property type="entry name" value="LCN_CSAB"/>
    <property type="match status" value="1"/>
</dbReference>
<reference key="1">
    <citation type="journal article" date="1979" name="Toxicon 17 Suppl.">
        <title>Studies of the toxins from Buthus eupeus scorpion venom.</title>
        <authorList>
            <person name="Grishin E.V."/>
            <person name="Soldatov N.M."/>
            <person name="Soldatova L.N."/>
            <person name="Ovchinnikov Y.A."/>
        </authorList>
    </citation>
    <scope>PROTEIN SEQUENCE</scope>
    <source>
        <tissue>Venom</tissue>
    </source>
</reference>
<reference key="2">
    <citation type="journal article" date="1980" name="Bioorg. Khim.">
        <title>The amino acid sequence of neurotoxin M10 from the venom of the Central Asian scorpion Buthus eupeus.</title>
        <authorList>
            <person name="Grishin E.V."/>
            <person name="Soldatova L.N."/>
            <person name="Shakhparonov M.I."/>
            <person name="Kazakov V.K."/>
        </authorList>
    </citation>
    <scope>PROTEIN SEQUENCE</scope>
    <source>
        <tissue>Venom</tissue>
    </source>
</reference>
<reference key="3">
    <citation type="journal article" date="1985" name="Bioorg. Khim.">
        <title>Neurotoxins from the venom of the Central Asian scorpion Buthus eupeus.</title>
        <authorList>
            <person name="Volkova T.M."/>
            <person name="Garsia A.F."/>
            <person name="Telezhinskaia I.N."/>
            <person name="Potapenko N.A."/>
            <person name="Grishin E.V."/>
        </authorList>
    </citation>
    <scope>PROTEIN SEQUENCE</scope>
    <source>
        <tissue>Venom</tissue>
    </source>
</reference>
<accession>P01490</accession>
<name>SCXA_MESEU</name>
<feature type="chain" id="PRO_0000066730" description="Alpha-toxin BeM10">
    <location>
        <begin position="1"/>
        <end position="65"/>
    </location>
</feature>
<feature type="domain" description="LCN-type CS-alpha/beta" evidence="1">
    <location>
        <begin position="2"/>
        <end position="65"/>
    </location>
</feature>
<feature type="disulfide bond" evidence="1">
    <location>
        <begin position="12"/>
        <end position="64"/>
    </location>
</feature>
<feature type="disulfide bond" evidence="1">
    <location>
        <begin position="16"/>
        <end position="35"/>
    </location>
</feature>
<feature type="disulfide bond" evidence="1">
    <location>
        <begin position="22"/>
        <end position="45"/>
    </location>
</feature>
<feature type="disulfide bond" evidence="1">
    <location>
        <begin position="26"/>
        <end position="47"/>
    </location>
</feature>